<accession>B8DC20</accession>
<protein>
    <recommendedName>
        <fullName evidence="1">Methylglyoxal synthase</fullName>
        <shortName evidence="1">MGS</shortName>
        <ecNumber evidence="1">4.2.3.3</ecNumber>
    </recommendedName>
</protein>
<evidence type="ECO:0000255" key="1">
    <source>
        <dbReference type="HAMAP-Rule" id="MF_00549"/>
    </source>
</evidence>
<gene>
    <name evidence="1" type="primary">mgsA</name>
    <name type="ordered locus">LMHCC_0651</name>
</gene>
<name>MGSA_LISMH</name>
<sequence length="134" mass="14883">MHIALIAHDEKKDLMVGFATAYKHLLEPHQLYATGTTGLRIIEATGLTVHRFKSGPLGGDQQIGARISENKMDLVIFLRDPLTAQPHEPDVTALIRLCDVYEIPLATNIGTAEILIRGLGAGFLDWRDLRRNDE</sequence>
<keyword id="KW-0456">Lyase</keyword>
<proteinExistence type="inferred from homology"/>
<reference key="1">
    <citation type="journal article" date="2011" name="J. Bacteriol.">
        <title>Genome sequence of lineage III Listeria monocytogenes strain HCC23.</title>
        <authorList>
            <person name="Steele C.L."/>
            <person name="Donaldson J.R."/>
            <person name="Paul D."/>
            <person name="Banes M.M."/>
            <person name="Arick T."/>
            <person name="Bridges S.M."/>
            <person name="Lawrence M.L."/>
        </authorList>
    </citation>
    <scope>NUCLEOTIDE SEQUENCE [LARGE SCALE GENOMIC DNA]</scope>
    <source>
        <strain>HCC23</strain>
    </source>
</reference>
<dbReference type="EC" id="4.2.3.3" evidence="1"/>
<dbReference type="EMBL" id="CP001175">
    <property type="protein sequence ID" value="ACK39006.1"/>
    <property type="molecule type" value="Genomic_DNA"/>
</dbReference>
<dbReference type="RefSeq" id="WP_003723016.1">
    <property type="nucleotide sequence ID" value="NC_011660.1"/>
</dbReference>
<dbReference type="SMR" id="B8DC20"/>
<dbReference type="GeneID" id="93239820"/>
<dbReference type="KEGG" id="lmh:LMHCC_0651"/>
<dbReference type="HOGENOM" id="CLU_120420_1_0_9"/>
<dbReference type="GO" id="GO:0005829">
    <property type="term" value="C:cytosol"/>
    <property type="evidence" value="ECO:0007669"/>
    <property type="project" value="TreeGrafter"/>
</dbReference>
<dbReference type="GO" id="GO:0008929">
    <property type="term" value="F:methylglyoxal synthase activity"/>
    <property type="evidence" value="ECO:0007669"/>
    <property type="project" value="UniProtKB-UniRule"/>
</dbReference>
<dbReference type="GO" id="GO:0019242">
    <property type="term" value="P:methylglyoxal biosynthetic process"/>
    <property type="evidence" value="ECO:0007669"/>
    <property type="project" value="UniProtKB-UniRule"/>
</dbReference>
<dbReference type="CDD" id="cd01422">
    <property type="entry name" value="MGS"/>
    <property type="match status" value="1"/>
</dbReference>
<dbReference type="FunFam" id="3.40.50.1380:FF:000006">
    <property type="entry name" value="Methylglyoxal synthase"/>
    <property type="match status" value="1"/>
</dbReference>
<dbReference type="Gene3D" id="3.40.50.1380">
    <property type="entry name" value="Methylglyoxal synthase-like domain"/>
    <property type="match status" value="1"/>
</dbReference>
<dbReference type="HAMAP" id="MF_00549">
    <property type="entry name" value="Methylglyoxal_synth"/>
    <property type="match status" value="1"/>
</dbReference>
<dbReference type="InterPro" id="IPR004363">
    <property type="entry name" value="Methylgl_synth"/>
</dbReference>
<dbReference type="InterPro" id="IPR018148">
    <property type="entry name" value="Methylglyoxal_synth_AS"/>
</dbReference>
<dbReference type="InterPro" id="IPR011607">
    <property type="entry name" value="MGS-like_dom"/>
</dbReference>
<dbReference type="InterPro" id="IPR036914">
    <property type="entry name" value="MGS-like_dom_sf"/>
</dbReference>
<dbReference type="NCBIfam" id="TIGR00160">
    <property type="entry name" value="MGSA"/>
    <property type="match status" value="1"/>
</dbReference>
<dbReference type="NCBIfam" id="NF003559">
    <property type="entry name" value="PRK05234.1"/>
    <property type="match status" value="1"/>
</dbReference>
<dbReference type="PANTHER" id="PTHR30492">
    <property type="entry name" value="METHYLGLYOXAL SYNTHASE"/>
    <property type="match status" value="1"/>
</dbReference>
<dbReference type="PANTHER" id="PTHR30492:SF0">
    <property type="entry name" value="METHYLGLYOXAL SYNTHASE"/>
    <property type="match status" value="1"/>
</dbReference>
<dbReference type="Pfam" id="PF02142">
    <property type="entry name" value="MGS"/>
    <property type="match status" value="1"/>
</dbReference>
<dbReference type="PIRSF" id="PIRSF006614">
    <property type="entry name" value="Methylglyox_syn"/>
    <property type="match status" value="1"/>
</dbReference>
<dbReference type="SMART" id="SM00851">
    <property type="entry name" value="MGS"/>
    <property type="match status" value="1"/>
</dbReference>
<dbReference type="SUPFAM" id="SSF52335">
    <property type="entry name" value="Methylglyoxal synthase-like"/>
    <property type="match status" value="1"/>
</dbReference>
<dbReference type="PROSITE" id="PS01335">
    <property type="entry name" value="METHYLGLYOXAL_SYNTH"/>
    <property type="match status" value="1"/>
</dbReference>
<dbReference type="PROSITE" id="PS51855">
    <property type="entry name" value="MGS"/>
    <property type="match status" value="1"/>
</dbReference>
<feature type="chain" id="PRO_1000146627" description="Methylglyoxal synthase">
    <location>
        <begin position="1"/>
        <end position="134"/>
    </location>
</feature>
<feature type="domain" description="MGS-like" evidence="1">
    <location>
        <begin position="1"/>
        <end position="134"/>
    </location>
</feature>
<feature type="active site" description="Proton donor/acceptor" evidence="1">
    <location>
        <position position="60"/>
    </location>
</feature>
<feature type="binding site" evidence="1">
    <location>
        <position position="8"/>
    </location>
    <ligand>
        <name>substrate</name>
    </ligand>
</feature>
<feature type="binding site" evidence="1">
    <location>
        <position position="12"/>
    </location>
    <ligand>
        <name>substrate</name>
    </ligand>
</feature>
<feature type="binding site" evidence="1">
    <location>
        <begin position="34"/>
        <end position="37"/>
    </location>
    <ligand>
        <name>substrate</name>
    </ligand>
</feature>
<feature type="binding site" evidence="1">
    <location>
        <begin position="54"/>
        <end position="55"/>
    </location>
    <ligand>
        <name>substrate</name>
    </ligand>
</feature>
<feature type="binding site" evidence="1">
    <location>
        <position position="87"/>
    </location>
    <ligand>
        <name>substrate</name>
    </ligand>
</feature>
<organism>
    <name type="scientific">Listeria monocytogenes serotype 4a (strain HCC23)</name>
    <dbReference type="NCBI Taxonomy" id="552536"/>
    <lineage>
        <taxon>Bacteria</taxon>
        <taxon>Bacillati</taxon>
        <taxon>Bacillota</taxon>
        <taxon>Bacilli</taxon>
        <taxon>Bacillales</taxon>
        <taxon>Listeriaceae</taxon>
        <taxon>Listeria</taxon>
    </lineage>
</organism>
<comment type="function">
    <text evidence="1">Catalyzes the formation of methylglyoxal from dihydroxyacetone phosphate.</text>
</comment>
<comment type="catalytic activity">
    <reaction evidence="1">
        <text>dihydroxyacetone phosphate = methylglyoxal + phosphate</text>
        <dbReference type="Rhea" id="RHEA:17937"/>
        <dbReference type="ChEBI" id="CHEBI:17158"/>
        <dbReference type="ChEBI" id="CHEBI:43474"/>
        <dbReference type="ChEBI" id="CHEBI:57642"/>
        <dbReference type="EC" id="4.2.3.3"/>
    </reaction>
</comment>
<comment type="similarity">
    <text evidence="1">Belongs to the methylglyoxal synthase family.</text>
</comment>